<protein>
    <recommendedName>
        <fullName evidence="1">ATP-dependent Clp protease adapter protein ClpS</fullName>
    </recommendedName>
</protein>
<gene>
    <name evidence="1" type="primary">clpS</name>
    <name type="ordered locus">HNE_1029</name>
</gene>
<accession>Q0C3E2</accession>
<evidence type="ECO:0000255" key="1">
    <source>
        <dbReference type="HAMAP-Rule" id="MF_00302"/>
    </source>
</evidence>
<evidence type="ECO:0000256" key="2">
    <source>
        <dbReference type="SAM" id="MobiDB-lite"/>
    </source>
</evidence>
<reference key="1">
    <citation type="journal article" date="2006" name="J. Bacteriol.">
        <title>Comparative genomic evidence for a close relationship between the dimorphic prosthecate bacteria Hyphomonas neptunium and Caulobacter crescentus.</title>
        <authorList>
            <person name="Badger J.H."/>
            <person name="Hoover T.R."/>
            <person name="Brun Y.V."/>
            <person name="Weiner R.M."/>
            <person name="Laub M.T."/>
            <person name="Alexandre G."/>
            <person name="Mrazek J."/>
            <person name="Ren Q."/>
            <person name="Paulsen I.T."/>
            <person name="Nelson K.E."/>
            <person name="Khouri H.M."/>
            <person name="Radune D."/>
            <person name="Sosa J."/>
            <person name="Dodson R.J."/>
            <person name="Sullivan S.A."/>
            <person name="Rosovitz M.J."/>
            <person name="Madupu R."/>
            <person name="Brinkac L.M."/>
            <person name="Durkin A.S."/>
            <person name="Daugherty S.C."/>
            <person name="Kothari S.P."/>
            <person name="Giglio M.G."/>
            <person name="Zhou L."/>
            <person name="Haft D.H."/>
            <person name="Selengut J.D."/>
            <person name="Davidsen T.M."/>
            <person name="Yang Q."/>
            <person name="Zafar N."/>
            <person name="Ward N.L."/>
        </authorList>
    </citation>
    <scope>NUCLEOTIDE SEQUENCE [LARGE SCALE GENOMIC DNA]</scope>
    <source>
        <strain>ATCC 15444</strain>
    </source>
</reference>
<sequence length="118" mass="13264">MNGSSNSGSPGGGQTGDDDGTGFDLATETRIKTKKPSLYRVLLLNDDYTPMEFVVFILERFFNRSREQATRIMLHVHQKGVGLCGVYTYEVAETKVAQVLDLARRHEHPLQCVMEKED</sequence>
<feature type="chain" id="PRO_1000022609" description="ATP-dependent Clp protease adapter protein ClpS">
    <location>
        <begin position="1"/>
        <end position="118"/>
    </location>
</feature>
<feature type="region of interest" description="Disordered" evidence="2">
    <location>
        <begin position="1"/>
        <end position="24"/>
    </location>
</feature>
<organism>
    <name type="scientific">Hyphomonas neptunium (strain ATCC 15444)</name>
    <dbReference type="NCBI Taxonomy" id="228405"/>
    <lineage>
        <taxon>Bacteria</taxon>
        <taxon>Pseudomonadati</taxon>
        <taxon>Pseudomonadota</taxon>
        <taxon>Alphaproteobacteria</taxon>
        <taxon>Hyphomonadales</taxon>
        <taxon>Hyphomonadaceae</taxon>
        <taxon>Hyphomonas</taxon>
    </lineage>
</organism>
<keyword id="KW-1185">Reference proteome</keyword>
<proteinExistence type="inferred from homology"/>
<name>CLPS_HYPNA</name>
<dbReference type="EMBL" id="CP000158">
    <property type="protein sequence ID" value="ABI77919.1"/>
    <property type="molecule type" value="Genomic_DNA"/>
</dbReference>
<dbReference type="RefSeq" id="WP_011646051.1">
    <property type="nucleotide sequence ID" value="NC_008358.1"/>
</dbReference>
<dbReference type="SMR" id="Q0C3E2"/>
<dbReference type="STRING" id="228405.HNE_1029"/>
<dbReference type="KEGG" id="hne:HNE_1029"/>
<dbReference type="eggNOG" id="COG2127">
    <property type="taxonomic scope" value="Bacteria"/>
</dbReference>
<dbReference type="HOGENOM" id="CLU_134358_0_0_5"/>
<dbReference type="Proteomes" id="UP000001959">
    <property type="component" value="Chromosome"/>
</dbReference>
<dbReference type="GO" id="GO:0030163">
    <property type="term" value="P:protein catabolic process"/>
    <property type="evidence" value="ECO:0007669"/>
    <property type="project" value="InterPro"/>
</dbReference>
<dbReference type="GO" id="GO:0006508">
    <property type="term" value="P:proteolysis"/>
    <property type="evidence" value="ECO:0007669"/>
    <property type="project" value="UniProtKB-UniRule"/>
</dbReference>
<dbReference type="FunFam" id="3.30.1390.10:FF:000002">
    <property type="entry name" value="ATP-dependent Clp protease adapter protein ClpS"/>
    <property type="match status" value="1"/>
</dbReference>
<dbReference type="Gene3D" id="3.30.1390.10">
    <property type="match status" value="1"/>
</dbReference>
<dbReference type="HAMAP" id="MF_00302">
    <property type="entry name" value="ClpS"/>
    <property type="match status" value="1"/>
</dbReference>
<dbReference type="InterPro" id="IPR022935">
    <property type="entry name" value="ClpS"/>
</dbReference>
<dbReference type="InterPro" id="IPR003769">
    <property type="entry name" value="ClpS_core"/>
</dbReference>
<dbReference type="InterPro" id="IPR014719">
    <property type="entry name" value="Ribosomal_bL12_C/ClpS-like"/>
</dbReference>
<dbReference type="NCBIfam" id="NF000669">
    <property type="entry name" value="PRK00033.1-2"/>
    <property type="match status" value="1"/>
</dbReference>
<dbReference type="NCBIfam" id="NF000672">
    <property type="entry name" value="PRK00033.1-5"/>
    <property type="match status" value="1"/>
</dbReference>
<dbReference type="PANTHER" id="PTHR33473:SF19">
    <property type="entry name" value="ATP-DEPENDENT CLP PROTEASE ADAPTER PROTEIN CLPS"/>
    <property type="match status" value="1"/>
</dbReference>
<dbReference type="PANTHER" id="PTHR33473">
    <property type="entry name" value="ATP-DEPENDENT CLP PROTEASE ADAPTER PROTEIN CLPS1, CHLOROPLASTIC"/>
    <property type="match status" value="1"/>
</dbReference>
<dbReference type="Pfam" id="PF02617">
    <property type="entry name" value="ClpS"/>
    <property type="match status" value="1"/>
</dbReference>
<dbReference type="SUPFAM" id="SSF54736">
    <property type="entry name" value="ClpS-like"/>
    <property type="match status" value="1"/>
</dbReference>
<comment type="function">
    <text evidence="1">Involved in the modulation of the specificity of the ClpAP-mediated ATP-dependent protein degradation.</text>
</comment>
<comment type="subunit">
    <text evidence="1">Binds to the N-terminal domain of the chaperone ClpA.</text>
</comment>
<comment type="similarity">
    <text evidence="1">Belongs to the ClpS family.</text>
</comment>